<evidence type="ECO:0000255" key="1">
    <source>
        <dbReference type="HAMAP-Rule" id="MF_00379"/>
    </source>
</evidence>
<evidence type="ECO:0000305" key="2"/>
<proteinExistence type="inferred from homology"/>
<accession>Q7MVZ2</accession>
<reference key="1">
    <citation type="journal article" date="2003" name="J. Bacteriol.">
        <title>Complete genome sequence of the oral pathogenic bacterium Porphyromonas gingivalis strain W83.</title>
        <authorList>
            <person name="Nelson K.E."/>
            <person name="Fleischmann R.D."/>
            <person name="DeBoy R.T."/>
            <person name="Paulsen I.T."/>
            <person name="Fouts D.E."/>
            <person name="Eisen J.A."/>
            <person name="Daugherty S.C."/>
            <person name="Dodson R.J."/>
            <person name="Durkin A.S."/>
            <person name="Gwinn M.L."/>
            <person name="Haft D.H."/>
            <person name="Kolonay J.F."/>
            <person name="Nelson W.C."/>
            <person name="Mason T.M."/>
            <person name="Tallon L."/>
            <person name="Gray J."/>
            <person name="Granger D."/>
            <person name="Tettelin H."/>
            <person name="Dong H."/>
            <person name="Galvin J.L."/>
            <person name="Duncan M.J."/>
            <person name="Dewhirst F.E."/>
            <person name="Fraser C.M."/>
        </authorList>
    </citation>
    <scope>NUCLEOTIDE SEQUENCE [LARGE SCALE GENOMIC DNA]</scope>
    <source>
        <strain>ATCC BAA-308 / W83</strain>
    </source>
</reference>
<protein>
    <recommendedName>
        <fullName evidence="1">tRNA modification GTPase MnmE</fullName>
        <ecNumber evidence="1">3.6.-.-</ecNumber>
    </recommendedName>
</protein>
<feature type="chain" id="PRO_0000188900" description="tRNA modification GTPase MnmE">
    <location>
        <begin position="1"/>
        <end position="474"/>
    </location>
</feature>
<feature type="domain" description="TrmE-type G">
    <location>
        <begin position="227"/>
        <end position="395"/>
    </location>
</feature>
<feature type="binding site" evidence="1">
    <location>
        <position position="28"/>
    </location>
    <ligand>
        <name>(6S)-5-formyl-5,6,7,8-tetrahydrofolate</name>
        <dbReference type="ChEBI" id="CHEBI:57457"/>
    </ligand>
</feature>
<feature type="binding site" evidence="1">
    <location>
        <position position="92"/>
    </location>
    <ligand>
        <name>(6S)-5-formyl-5,6,7,8-tetrahydrofolate</name>
        <dbReference type="ChEBI" id="CHEBI:57457"/>
    </ligand>
</feature>
<feature type="binding site" evidence="1">
    <location>
        <position position="131"/>
    </location>
    <ligand>
        <name>(6S)-5-formyl-5,6,7,8-tetrahydrofolate</name>
        <dbReference type="ChEBI" id="CHEBI:57457"/>
    </ligand>
</feature>
<feature type="binding site" evidence="1">
    <location>
        <begin position="237"/>
        <end position="242"/>
    </location>
    <ligand>
        <name>GTP</name>
        <dbReference type="ChEBI" id="CHEBI:37565"/>
    </ligand>
</feature>
<feature type="binding site" evidence="1">
    <location>
        <position position="237"/>
    </location>
    <ligand>
        <name>K(+)</name>
        <dbReference type="ChEBI" id="CHEBI:29103"/>
    </ligand>
</feature>
<feature type="binding site" evidence="1">
    <location>
        <position position="241"/>
    </location>
    <ligand>
        <name>Mg(2+)</name>
        <dbReference type="ChEBI" id="CHEBI:18420"/>
    </ligand>
</feature>
<feature type="binding site" evidence="1">
    <location>
        <begin position="256"/>
        <end position="262"/>
    </location>
    <ligand>
        <name>GTP</name>
        <dbReference type="ChEBI" id="CHEBI:37565"/>
    </ligand>
</feature>
<feature type="binding site" evidence="1">
    <location>
        <position position="256"/>
    </location>
    <ligand>
        <name>K(+)</name>
        <dbReference type="ChEBI" id="CHEBI:29103"/>
    </ligand>
</feature>
<feature type="binding site" evidence="1">
    <location>
        <position position="258"/>
    </location>
    <ligand>
        <name>K(+)</name>
        <dbReference type="ChEBI" id="CHEBI:29103"/>
    </ligand>
</feature>
<feature type="binding site" evidence="1">
    <location>
        <position position="261"/>
    </location>
    <ligand>
        <name>K(+)</name>
        <dbReference type="ChEBI" id="CHEBI:29103"/>
    </ligand>
</feature>
<feature type="binding site" evidence="1">
    <location>
        <position position="262"/>
    </location>
    <ligand>
        <name>Mg(2+)</name>
        <dbReference type="ChEBI" id="CHEBI:18420"/>
    </ligand>
</feature>
<feature type="binding site" evidence="1">
    <location>
        <begin position="281"/>
        <end position="284"/>
    </location>
    <ligand>
        <name>GTP</name>
        <dbReference type="ChEBI" id="CHEBI:37565"/>
    </ligand>
</feature>
<feature type="binding site" evidence="1">
    <location>
        <begin position="376"/>
        <end position="378"/>
    </location>
    <ligand>
        <name>GTP</name>
        <dbReference type="ChEBI" id="CHEBI:37565"/>
    </ligand>
</feature>
<feature type="binding site" evidence="1">
    <location>
        <position position="474"/>
    </location>
    <ligand>
        <name>(6S)-5-formyl-5,6,7,8-tetrahydrofolate</name>
        <dbReference type="ChEBI" id="CHEBI:57457"/>
    </ligand>
</feature>
<name>MNME_PORGI</name>
<gene>
    <name evidence="1" type="primary">mnmE</name>
    <name evidence="1" type="synonym">trmE</name>
    <name type="ordered locus">PG_0876</name>
</gene>
<sequence>MSILHSFNKDTICAVATAPGVGGIAVIRVSGADAFRLVSPLFLYRGKAIDLSGAKPRTALYGEIMEADELIDEVILTCFHGPHSFTAEHTVEIACHGSIYIRRRILEALINQGCRLAQPGEFTRRAYLNGRMDLSSAEAVADIIASESKAQHQMAMKQLRGGYSEELNALREELLRLTGLMELELDFPEEDVEFADRTELLALCDQIELKLKKLIDSYRLGNAVKRGIPVAIVGTTNVGKSTLLNTLLGEERAIVSDIHGTTRDTIEDTMHIGGYLFRFVDTAGLRETEDTIESLGIERSRSKIKEADIILAVVDGTRISEANQLDYIKSIWDEREERTLILLVNKSESLAEADRIGLSETLQTKLSTPTKPIFISAREGRGIDELKGELTQIMETSGANEADLIVSNARHHQLLREAFDALRRMRLGFDMGLSTDLLTLDLRHAITSIGEITGREITSDDTLHYIFAHFCIGK</sequence>
<dbReference type="EC" id="3.6.-.-" evidence="1"/>
<dbReference type="EMBL" id="AE015924">
    <property type="protein sequence ID" value="AAQ66023.1"/>
    <property type="status" value="ALT_INIT"/>
    <property type="molecule type" value="Genomic_DNA"/>
</dbReference>
<dbReference type="RefSeq" id="WP_005874231.1">
    <property type="nucleotide sequence ID" value="NC_002950.2"/>
</dbReference>
<dbReference type="SMR" id="Q7MVZ2"/>
<dbReference type="STRING" id="242619.PG_0876"/>
<dbReference type="EnsemblBacteria" id="AAQ66023">
    <property type="protein sequence ID" value="AAQ66023"/>
    <property type="gene ID" value="PG_0876"/>
</dbReference>
<dbReference type="KEGG" id="pgi:PG_0876"/>
<dbReference type="PATRIC" id="fig|242619.8.peg.812"/>
<dbReference type="eggNOG" id="COG0486">
    <property type="taxonomic scope" value="Bacteria"/>
</dbReference>
<dbReference type="HOGENOM" id="CLU_019624_4_1_10"/>
<dbReference type="BioCyc" id="PGIN242619:G1G02-819-MONOMER"/>
<dbReference type="Proteomes" id="UP000000588">
    <property type="component" value="Chromosome"/>
</dbReference>
<dbReference type="GO" id="GO:0005829">
    <property type="term" value="C:cytosol"/>
    <property type="evidence" value="ECO:0007669"/>
    <property type="project" value="TreeGrafter"/>
</dbReference>
<dbReference type="GO" id="GO:0005525">
    <property type="term" value="F:GTP binding"/>
    <property type="evidence" value="ECO:0007669"/>
    <property type="project" value="UniProtKB-UniRule"/>
</dbReference>
<dbReference type="GO" id="GO:0003924">
    <property type="term" value="F:GTPase activity"/>
    <property type="evidence" value="ECO:0007669"/>
    <property type="project" value="UniProtKB-UniRule"/>
</dbReference>
<dbReference type="GO" id="GO:0046872">
    <property type="term" value="F:metal ion binding"/>
    <property type="evidence" value="ECO:0007669"/>
    <property type="project" value="UniProtKB-KW"/>
</dbReference>
<dbReference type="GO" id="GO:0030488">
    <property type="term" value="P:tRNA methylation"/>
    <property type="evidence" value="ECO:0007669"/>
    <property type="project" value="TreeGrafter"/>
</dbReference>
<dbReference type="GO" id="GO:0002098">
    <property type="term" value="P:tRNA wobble uridine modification"/>
    <property type="evidence" value="ECO:0007669"/>
    <property type="project" value="TreeGrafter"/>
</dbReference>
<dbReference type="CDD" id="cd04164">
    <property type="entry name" value="trmE"/>
    <property type="match status" value="1"/>
</dbReference>
<dbReference type="CDD" id="cd14858">
    <property type="entry name" value="TrmE_N"/>
    <property type="match status" value="1"/>
</dbReference>
<dbReference type="FunFam" id="3.40.50.300:FF:001376">
    <property type="entry name" value="tRNA modification GTPase MnmE"/>
    <property type="match status" value="1"/>
</dbReference>
<dbReference type="Gene3D" id="3.40.50.300">
    <property type="entry name" value="P-loop containing nucleotide triphosphate hydrolases"/>
    <property type="match status" value="1"/>
</dbReference>
<dbReference type="Gene3D" id="3.30.1360.120">
    <property type="entry name" value="Probable tRNA modification gtpase trme, domain 1"/>
    <property type="match status" value="1"/>
</dbReference>
<dbReference type="Gene3D" id="1.20.120.430">
    <property type="entry name" value="tRNA modification GTPase MnmE domain 2"/>
    <property type="match status" value="1"/>
</dbReference>
<dbReference type="HAMAP" id="MF_00379">
    <property type="entry name" value="GTPase_MnmE"/>
    <property type="match status" value="1"/>
</dbReference>
<dbReference type="InterPro" id="IPR031168">
    <property type="entry name" value="G_TrmE"/>
</dbReference>
<dbReference type="InterPro" id="IPR006073">
    <property type="entry name" value="GTP-bd"/>
</dbReference>
<dbReference type="InterPro" id="IPR018948">
    <property type="entry name" value="GTP-bd_TrmE_N"/>
</dbReference>
<dbReference type="InterPro" id="IPR004520">
    <property type="entry name" value="GTPase_MnmE"/>
</dbReference>
<dbReference type="InterPro" id="IPR027368">
    <property type="entry name" value="MnmE_dom2"/>
</dbReference>
<dbReference type="InterPro" id="IPR025867">
    <property type="entry name" value="MnmE_helical"/>
</dbReference>
<dbReference type="InterPro" id="IPR027417">
    <property type="entry name" value="P-loop_NTPase"/>
</dbReference>
<dbReference type="InterPro" id="IPR005225">
    <property type="entry name" value="Small_GTP-bd"/>
</dbReference>
<dbReference type="InterPro" id="IPR027266">
    <property type="entry name" value="TrmE/GcvT_dom1"/>
</dbReference>
<dbReference type="NCBIfam" id="TIGR00450">
    <property type="entry name" value="mnmE_trmE_thdF"/>
    <property type="match status" value="1"/>
</dbReference>
<dbReference type="NCBIfam" id="NF003661">
    <property type="entry name" value="PRK05291.1-3"/>
    <property type="match status" value="1"/>
</dbReference>
<dbReference type="NCBIfam" id="TIGR00231">
    <property type="entry name" value="small_GTP"/>
    <property type="match status" value="1"/>
</dbReference>
<dbReference type="PANTHER" id="PTHR42714">
    <property type="entry name" value="TRNA MODIFICATION GTPASE GTPBP3"/>
    <property type="match status" value="1"/>
</dbReference>
<dbReference type="PANTHER" id="PTHR42714:SF2">
    <property type="entry name" value="TRNA MODIFICATION GTPASE GTPBP3, MITOCHONDRIAL"/>
    <property type="match status" value="1"/>
</dbReference>
<dbReference type="Pfam" id="PF01926">
    <property type="entry name" value="MMR_HSR1"/>
    <property type="match status" value="1"/>
</dbReference>
<dbReference type="Pfam" id="PF12631">
    <property type="entry name" value="MnmE_helical"/>
    <property type="match status" value="1"/>
</dbReference>
<dbReference type="Pfam" id="PF10396">
    <property type="entry name" value="TrmE_N"/>
    <property type="match status" value="1"/>
</dbReference>
<dbReference type="PRINTS" id="PR00326">
    <property type="entry name" value="GTP1OBG"/>
</dbReference>
<dbReference type="SUPFAM" id="SSF52540">
    <property type="entry name" value="P-loop containing nucleoside triphosphate hydrolases"/>
    <property type="match status" value="1"/>
</dbReference>
<dbReference type="PROSITE" id="PS51709">
    <property type="entry name" value="G_TRME"/>
    <property type="match status" value="1"/>
</dbReference>
<organism>
    <name type="scientific">Porphyromonas gingivalis (strain ATCC BAA-308 / W83)</name>
    <dbReference type="NCBI Taxonomy" id="242619"/>
    <lineage>
        <taxon>Bacteria</taxon>
        <taxon>Pseudomonadati</taxon>
        <taxon>Bacteroidota</taxon>
        <taxon>Bacteroidia</taxon>
        <taxon>Bacteroidales</taxon>
        <taxon>Porphyromonadaceae</taxon>
        <taxon>Porphyromonas</taxon>
    </lineage>
</organism>
<keyword id="KW-0963">Cytoplasm</keyword>
<keyword id="KW-0342">GTP-binding</keyword>
<keyword id="KW-0378">Hydrolase</keyword>
<keyword id="KW-0460">Magnesium</keyword>
<keyword id="KW-0479">Metal-binding</keyword>
<keyword id="KW-0547">Nucleotide-binding</keyword>
<keyword id="KW-0630">Potassium</keyword>
<keyword id="KW-1185">Reference proteome</keyword>
<keyword id="KW-0819">tRNA processing</keyword>
<comment type="function">
    <text evidence="1">Exhibits a very high intrinsic GTPase hydrolysis rate. Involved in the addition of a carboxymethylaminomethyl (cmnm) group at the wobble position (U34) of certain tRNAs, forming tRNA-cmnm(5)s(2)U34.</text>
</comment>
<comment type="cofactor">
    <cofactor evidence="1">
        <name>K(+)</name>
        <dbReference type="ChEBI" id="CHEBI:29103"/>
    </cofactor>
    <text evidence="1">Binds 1 potassium ion per subunit.</text>
</comment>
<comment type="subunit">
    <text evidence="1">Homodimer. Heterotetramer of two MnmE and two MnmG subunits.</text>
</comment>
<comment type="subcellular location">
    <subcellularLocation>
        <location evidence="1">Cytoplasm</location>
    </subcellularLocation>
</comment>
<comment type="similarity">
    <text evidence="1">Belongs to the TRAFAC class TrmE-Era-EngA-EngB-Septin-like GTPase superfamily. TrmE GTPase family.</text>
</comment>
<comment type="sequence caution" evidence="2">
    <conflict type="erroneous initiation">
        <sequence resource="EMBL-CDS" id="AAQ66023"/>
    </conflict>
</comment>